<sequence length="473" mass="54564">MPLPDKFFLFIQDDYHNVKLRVKINEKVLRGQPLIFSDDFNVPVHAPTSGLIENICFNSDSIKKNIKIVISPDYLDQWIRLNPIKDYKKYAPEKLIKIIHQSGVVGLGGGQFPSSKKIIFSINRAHTLIVNAVESEPYITSDNCLIYNHISEILIGCKIICWITKIKTVLIAIQEDNIQSISKIQHLIKNKSLFKICIIKKKYPAGSSKVLVKSLTGKEVPHGKHSIDIGYLIFNVATIFSIKRAIINGKPLTERVVTLMSDKNLLSGNFWVRIGTPIKYFLTSNKLKQSFIASVYLGGPFMGKKINNLNHSILKKTNSIFITHKKEKNESISEKTCIRCGYCSYVCPVNLLPQQLYWYIKNKNHVQTKKHYVLDCIECKACEKVCPSYIPLVKYFIQEKNILKNITLENNRKKMSLIRFKTREQRLFNEKRMIHENNDTFLMKKKDKKINNITKTVLKKTLQDAIERMKSKQ</sequence>
<name>RNFC_BUCAI</name>
<protein>
    <recommendedName>
        <fullName evidence="1">Ion-translocating oxidoreductase complex subunit C</fullName>
        <ecNumber evidence="1">7.-.-.-</ecNumber>
    </recommendedName>
    <alternativeName>
        <fullName evidence="1">Rnf electron transport complex subunit C</fullName>
    </alternativeName>
</protein>
<proteinExistence type="inferred from homology"/>
<gene>
    <name evidence="1" type="primary">rnfC</name>
    <name type="ordered locus">BU115</name>
</gene>
<reference key="1">
    <citation type="journal article" date="2000" name="Nature">
        <title>Genome sequence of the endocellular bacterial symbiont of aphids Buchnera sp. APS.</title>
        <authorList>
            <person name="Shigenobu S."/>
            <person name="Watanabe H."/>
            <person name="Hattori M."/>
            <person name="Sakaki Y."/>
            <person name="Ishikawa H."/>
        </authorList>
    </citation>
    <scope>NUCLEOTIDE SEQUENCE [LARGE SCALE GENOMIC DNA]</scope>
    <source>
        <strain>APS</strain>
    </source>
</reference>
<comment type="function">
    <text evidence="1">Part of a membrane-bound complex that couples electron transfer with translocation of ions across the membrane.</text>
</comment>
<comment type="cofactor">
    <cofactor evidence="1">
        <name>[4Fe-4S] cluster</name>
        <dbReference type="ChEBI" id="CHEBI:49883"/>
    </cofactor>
    <text evidence="1">Binds 2 [4Fe-4S] clusters per subunit.</text>
</comment>
<comment type="subunit">
    <text evidence="1">The complex is composed of six subunits: RnfA, RnfB, RnfC, RnfD, RnfE and RnfG.</text>
</comment>
<comment type="subcellular location">
    <subcellularLocation>
        <location evidence="1">Cell inner membrane</location>
        <topology evidence="1">Peripheral membrane protein</topology>
    </subcellularLocation>
</comment>
<comment type="similarity">
    <text evidence="1">Belongs to the 4Fe4S bacterial-type ferredoxin family. RnfC subfamily.</text>
</comment>
<keyword id="KW-0004">4Fe-4S</keyword>
<keyword id="KW-0997">Cell inner membrane</keyword>
<keyword id="KW-1003">Cell membrane</keyword>
<keyword id="KW-0249">Electron transport</keyword>
<keyword id="KW-0408">Iron</keyword>
<keyword id="KW-0411">Iron-sulfur</keyword>
<keyword id="KW-0472">Membrane</keyword>
<keyword id="KW-0479">Metal-binding</keyword>
<keyword id="KW-1185">Reference proteome</keyword>
<keyword id="KW-0677">Repeat</keyword>
<keyword id="KW-1278">Translocase</keyword>
<keyword id="KW-0813">Transport</keyword>
<accession>P57215</accession>
<feature type="chain" id="PRO_0000073203" description="Ion-translocating oxidoreductase complex subunit C">
    <location>
        <begin position="1"/>
        <end position="473"/>
    </location>
</feature>
<feature type="domain" description="4Fe-4S ferredoxin-type 1" evidence="1">
    <location>
        <begin position="328"/>
        <end position="357"/>
    </location>
</feature>
<feature type="domain" description="4Fe-4S ferredoxin-type 2" evidence="1">
    <location>
        <begin position="368"/>
        <end position="396"/>
    </location>
</feature>
<feature type="binding site" evidence="1">
    <location>
        <position position="337"/>
    </location>
    <ligand>
        <name>[4Fe-4S] cluster</name>
        <dbReference type="ChEBI" id="CHEBI:49883"/>
        <label>1</label>
    </ligand>
</feature>
<feature type="binding site" evidence="1">
    <location>
        <position position="340"/>
    </location>
    <ligand>
        <name>[4Fe-4S] cluster</name>
        <dbReference type="ChEBI" id="CHEBI:49883"/>
        <label>1</label>
    </ligand>
</feature>
<feature type="binding site" evidence="1">
    <location>
        <position position="343"/>
    </location>
    <ligand>
        <name>[4Fe-4S] cluster</name>
        <dbReference type="ChEBI" id="CHEBI:49883"/>
        <label>1</label>
    </ligand>
</feature>
<feature type="binding site" evidence="1">
    <location>
        <position position="347"/>
    </location>
    <ligand>
        <name>[4Fe-4S] cluster</name>
        <dbReference type="ChEBI" id="CHEBI:49883"/>
        <label>2</label>
    </ligand>
</feature>
<feature type="binding site" evidence="1">
    <location>
        <position position="376"/>
    </location>
    <ligand>
        <name>[4Fe-4S] cluster</name>
        <dbReference type="ChEBI" id="CHEBI:49883"/>
        <label>2</label>
    </ligand>
</feature>
<feature type="binding site" evidence="1">
    <location>
        <position position="379"/>
    </location>
    <ligand>
        <name>[4Fe-4S] cluster</name>
        <dbReference type="ChEBI" id="CHEBI:49883"/>
        <label>2</label>
    </ligand>
</feature>
<feature type="binding site" evidence="1">
    <location>
        <position position="382"/>
    </location>
    <ligand>
        <name>[4Fe-4S] cluster</name>
        <dbReference type="ChEBI" id="CHEBI:49883"/>
        <label>2</label>
    </ligand>
</feature>
<feature type="binding site" evidence="1">
    <location>
        <position position="386"/>
    </location>
    <ligand>
        <name>[4Fe-4S] cluster</name>
        <dbReference type="ChEBI" id="CHEBI:49883"/>
        <label>1</label>
    </ligand>
</feature>
<dbReference type="EC" id="7.-.-.-" evidence="1"/>
<dbReference type="EMBL" id="BA000003">
    <property type="protein sequence ID" value="BAB12833.1"/>
    <property type="molecule type" value="Genomic_DNA"/>
</dbReference>
<dbReference type="RefSeq" id="NP_239947.1">
    <property type="nucleotide sequence ID" value="NC_002528.1"/>
</dbReference>
<dbReference type="SMR" id="P57215"/>
<dbReference type="STRING" id="563178.BUAP5A_113"/>
<dbReference type="EnsemblBacteria" id="BAB12833">
    <property type="protein sequence ID" value="BAB12833"/>
    <property type="gene ID" value="BAB12833"/>
</dbReference>
<dbReference type="KEGG" id="buc:BU115"/>
<dbReference type="PATRIC" id="fig|107806.10.peg.123"/>
<dbReference type="eggNOG" id="COG4656">
    <property type="taxonomic scope" value="Bacteria"/>
</dbReference>
<dbReference type="HOGENOM" id="CLU_010808_6_2_6"/>
<dbReference type="Proteomes" id="UP000001806">
    <property type="component" value="Chromosome"/>
</dbReference>
<dbReference type="GO" id="GO:0005886">
    <property type="term" value="C:plasma membrane"/>
    <property type="evidence" value="ECO:0007669"/>
    <property type="project" value="UniProtKB-SubCell"/>
</dbReference>
<dbReference type="GO" id="GO:0051539">
    <property type="term" value="F:4 iron, 4 sulfur cluster binding"/>
    <property type="evidence" value="ECO:0007669"/>
    <property type="project" value="UniProtKB-KW"/>
</dbReference>
<dbReference type="GO" id="GO:0009055">
    <property type="term" value="F:electron transfer activity"/>
    <property type="evidence" value="ECO:0007669"/>
    <property type="project" value="InterPro"/>
</dbReference>
<dbReference type="GO" id="GO:0046872">
    <property type="term" value="F:metal ion binding"/>
    <property type="evidence" value="ECO:0007669"/>
    <property type="project" value="UniProtKB-KW"/>
</dbReference>
<dbReference type="GO" id="GO:0022900">
    <property type="term" value="P:electron transport chain"/>
    <property type="evidence" value="ECO:0007669"/>
    <property type="project" value="UniProtKB-UniRule"/>
</dbReference>
<dbReference type="Gene3D" id="3.30.70.20">
    <property type="match status" value="1"/>
</dbReference>
<dbReference type="Gene3D" id="3.40.50.11540">
    <property type="entry name" value="NADH-ubiquinone oxidoreductase 51kDa subunit"/>
    <property type="match status" value="1"/>
</dbReference>
<dbReference type="HAMAP" id="MF_00461">
    <property type="entry name" value="RsxC_RnfC"/>
    <property type="match status" value="1"/>
</dbReference>
<dbReference type="InterPro" id="IPR017896">
    <property type="entry name" value="4Fe4S_Fe-S-bd"/>
</dbReference>
<dbReference type="InterPro" id="IPR017900">
    <property type="entry name" value="4Fe4S_Fe_S_CS"/>
</dbReference>
<dbReference type="InterPro" id="IPR010208">
    <property type="entry name" value="Ion_transpt_RnfC/RsxC"/>
</dbReference>
<dbReference type="InterPro" id="IPR011538">
    <property type="entry name" value="Nuo51_FMN-bd"/>
</dbReference>
<dbReference type="InterPro" id="IPR037225">
    <property type="entry name" value="Nuo51_FMN-bd_sf"/>
</dbReference>
<dbReference type="NCBIfam" id="NF003454">
    <property type="entry name" value="PRK05035.1"/>
    <property type="match status" value="1"/>
</dbReference>
<dbReference type="NCBIfam" id="TIGR01945">
    <property type="entry name" value="rnfC"/>
    <property type="match status" value="1"/>
</dbReference>
<dbReference type="PANTHER" id="PTHR43034">
    <property type="entry name" value="ION-TRANSLOCATING OXIDOREDUCTASE COMPLEX SUBUNIT C"/>
    <property type="match status" value="1"/>
</dbReference>
<dbReference type="PANTHER" id="PTHR43034:SF2">
    <property type="entry name" value="ION-TRANSLOCATING OXIDOREDUCTASE COMPLEX SUBUNIT C"/>
    <property type="match status" value="1"/>
</dbReference>
<dbReference type="Pfam" id="PF01512">
    <property type="entry name" value="Complex1_51K"/>
    <property type="match status" value="1"/>
</dbReference>
<dbReference type="Pfam" id="PF12838">
    <property type="entry name" value="Fer4_7"/>
    <property type="match status" value="1"/>
</dbReference>
<dbReference type="SUPFAM" id="SSF46548">
    <property type="entry name" value="alpha-helical ferredoxin"/>
    <property type="match status" value="1"/>
</dbReference>
<dbReference type="SUPFAM" id="SSF142019">
    <property type="entry name" value="Nqo1 FMN-binding domain-like"/>
    <property type="match status" value="1"/>
</dbReference>
<dbReference type="PROSITE" id="PS00198">
    <property type="entry name" value="4FE4S_FER_1"/>
    <property type="match status" value="2"/>
</dbReference>
<dbReference type="PROSITE" id="PS51379">
    <property type="entry name" value="4FE4S_FER_2"/>
    <property type="match status" value="2"/>
</dbReference>
<evidence type="ECO:0000255" key="1">
    <source>
        <dbReference type="HAMAP-Rule" id="MF_00461"/>
    </source>
</evidence>
<organism>
    <name type="scientific">Buchnera aphidicola subsp. Acyrthosiphon pisum (strain APS)</name>
    <name type="common">Acyrthosiphon pisum symbiotic bacterium</name>
    <dbReference type="NCBI Taxonomy" id="107806"/>
    <lineage>
        <taxon>Bacteria</taxon>
        <taxon>Pseudomonadati</taxon>
        <taxon>Pseudomonadota</taxon>
        <taxon>Gammaproteobacteria</taxon>
        <taxon>Enterobacterales</taxon>
        <taxon>Erwiniaceae</taxon>
        <taxon>Buchnera</taxon>
    </lineage>
</organism>